<dbReference type="EMBL" id="CP001612">
    <property type="protein sequence ID" value="ACP53938.1"/>
    <property type="molecule type" value="Genomic_DNA"/>
</dbReference>
<dbReference type="RefSeq" id="WP_012720064.1">
    <property type="nucleotide sequence ID" value="NC_012633.1"/>
</dbReference>
<dbReference type="SMR" id="C3PLU8"/>
<dbReference type="KEGG" id="raf:RAF_ORF1159"/>
<dbReference type="HOGENOM" id="CLU_027562_9_0_5"/>
<dbReference type="Proteomes" id="UP000002305">
    <property type="component" value="Chromosome"/>
</dbReference>
<dbReference type="GO" id="GO:0005737">
    <property type="term" value="C:cytoplasm"/>
    <property type="evidence" value="ECO:0007669"/>
    <property type="project" value="UniProtKB-SubCell"/>
</dbReference>
<dbReference type="GO" id="GO:0003677">
    <property type="term" value="F:DNA binding"/>
    <property type="evidence" value="ECO:0007669"/>
    <property type="project" value="UniProtKB-KW"/>
</dbReference>
<dbReference type="GO" id="GO:0009037">
    <property type="term" value="F:tyrosine-based site-specific recombinase activity"/>
    <property type="evidence" value="ECO:0007669"/>
    <property type="project" value="UniProtKB-UniRule"/>
</dbReference>
<dbReference type="GO" id="GO:0051301">
    <property type="term" value="P:cell division"/>
    <property type="evidence" value="ECO:0007669"/>
    <property type="project" value="UniProtKB-KW"/>
</dbReference>
<dbReference type="GO" id="GO:0007059">
    <property type="term" value="P:chromosome segregation"/>
    <property type="evidence" value="ECO:0007669"/>
    <property type="project" value="UniProtKB-UniRule"/>
</dbReference>
<dbReference type="GO" id="GO:0006313">
    <property type="term" value="P:DNA transposition"/>
    <property type="evidence" value="ECO:0007669"/>
    <property type="project" value="UniProtKB-UniRule"/>
</dbReference>
<dbReference type="CDD" id="cd00798">
    <property type="entry name" value="INT_XerDC_C"/>
    <property type="match status" value="1"/>
</dbReference>
<dbReference type="Gene3D" id="1.10.150.130">
    <property type="match status" value="1"/>
</dbReference>
<dbReference type="Gene3D" id="1.10.443.10">
    <property type="entry name" value="Intergrase catalytic core"/>
    <property type="match status" value="1"/>
</dbReference>
<dbReference type="HAMAP" id="MF_01808">
    <property type="entry name" value="Recomb_XerC_XerD"/>
    <property type="match status" value="1"/>
</dbReference>
<dbReference type="InterPro" id="IPR044068">
    <property type="entry name" value="CB"/>
</dbReference>
<dbReference type="InterPro" id="IPR011010">
    <property type="entry name" value="DNA_brk_join_enz"/>
</dbReference>
<dbReference type="InterPro" id="IPR013762">
    <property type="entry name" value="Integrase-like_cat_sf"/>
</dbReference>
<dbReference type="InterPro" id="IPR002104">
    <property type="entry name" value="Integrase_catalytic"/>
</dbReference>
<dbReference type="InterPro" id="IPR010998">
    <property type="entry name" value="Integrase_recombinase_N"/>
</dbReference>
<dbReference type="InterPro" id="IPR004107">
    <property type="entry name" value="Integrase_SAM-like_N"/>
</dbReference>
<dbReference type="InterPro" id="IPR023009">
    <property type="entry name" value="Tyrosine_recombinase_XerC/XerD"/>
</dbReference>
<dbReference type="InterPro" id="IPR050090">
    <property type="entry name" value="Tyrosine_recombinase_XerCD"/>
</dbReference>
<dbReference type="PANTHER" id="PTHR30349">
    <property type="entry name" value="PHAGE INTEGRASE-RELATED"/>
    <property type="match status" value="1"/>
</dbReference>
<dbReference type="PANTHER" id="PTHR30349:SF90">
    <property type="entry name" value="TYROSINE RECOMBINASE XERD"/>
    <property type="match status" value="1"/>
</dbReference>
<dbReference type="Pfam" id="PF02899">
    <property type="entry name" value="Phage_int_SAM_1"/>
    <property type="match status" value="1"/>
</dbReference>
<dbReference type="Pfam" id="PF00589">
    <property type="entry name" value="Phage_integrase"/>
    <property type="match status" value="1"/>
</dbReference>
<dbReference type="SUPFAM" id="SSF56349">
    <property type="entry name" value="DNA breaking-rejoining enzymes"/>
    <property type="match status" value="1"/>
</dbReference>
<dbReference type="PROSITE" id="PS51900">
    <property type="entry name" value="CB"/>
    <property type="match status" value="1"/>
</dbReference>
<dbReference type="PROSITE" id="PS51898">
    <property type="entry name" value="TYR_RECOMBINASE"/>
    <property type="match status" value="1"/>
</dbReference>
<evidence type="ECO:0000255" key="1">
    <source>
        <dbReference type="HAMAP-Rule" id="MF_01808"/>
    </source>
</evidence>
<evidence type="ECO:0000255" key="2">
    <source>
        <dbReference type="PROSITE-ProRule" id="PRU01246"/>
    </source>
</evidence>
<evidence type="ECO:0000255" key="3">
    <source>
        <dbReference type="PROSITE-ProRule" id="PRU01248"/>
    </source>
</evidence>
<gene>
    <name evidence="1" type="primary">xerC</name>
    <name type="ordered locus">RAF_ORF1159</name>
</gene>
<proteinExistence type="inferred from homology"/>
<reference key="1">
    <citation type="journal article" date="2009" name="BMC Genomics">
        <title>Analysis of the Rickettsia africae genome reveals that virulence acquisition in Rickettsia species may be explained by genome reduction.</title>
        <authorList>
            <person name="Fournier P.-E."/>
            <person name="El Karkouri K."/>
            <person name="Leroy Q."/>
            <person name="Robert C."/>
            <person name="Giumelli B."/>
            <person name="Renesto P."/>
            <person name="Socolovschi C."/>
            <person name="Parola P."/>
            <person name="Audic S."/>
            <person name="Raoult D."/>
        </authorList>
    </citation>
    <scope>NUCLEOTIDE SEQUENCE [LARGE SCALE GENOMIC DNA]</scope>
    <source>
        <strain>ESF-5</strain>
    </source>
</reference>
<sequence length="305" mass="35368">MLDTSIQALINKWQKYLVLQRNYSNHTVISYNNDLKHFLEFMNYYNSELVTINHIKTADIRLIRSWLAKRNCDNFTASSISRGLSAVKNFYRFLEKTTQLNSHIIFSIKSPKKTKLLPKALSEDDVVISLEHIEEYGNVKWIELRNKALLVLIYASGLRISEALSITKLHLQNLEFIRIIGKGSKERIIPWLPIAKNLITQYLEILPYKLGDNEPIFRGKQGKKLQPPVFNRELIKLKHFYGLPQHLTAHSFRHSFASHLLEHGADLRSLQELLGHKSLSTTQSYTKTSIKHLEAVYTTAYPIKK</sequence>
<feature type="chain" id="PRO_1000215958" description="Tyrosine recombinase XerC">
    <location>
        <begin position="1"/>
        <end position="305"/>
    </location>
</feature>
<feature type="domain" description="Core-binding (CB)" evidence="3">
    <location>
        <begin position="4"/>
        <end position="95"/>
    </location>
</feature>
<feature type="domain" description="Tyr recombinase" evidence="2">
    <location>
        <begin position="116"/>
        <end position="298"/>
    </location>
</feature>
<feature type="active site" evidence="1">
    <location>
        <position position="159"/>
    </location>
</feature>
<feature type="active site" evidence="1">
    <location>
        <position position="182"/>
    </location>
</feature>
<feature type="active site" evidence="1">
    <location>
        <position position="250"/>
    </location>
</feature>
<feature type="active site" evidence="1">
    <location>
        <position position="253"/>
    </location>
</feature>
<feature type="active site" evidence="1">
    <location>
        <position position="276"/>
    </location>
</feature>
<feature type="active site" description="O-(3'-phospho-DNA)-tyrosine intermediate" evidence="1">
    <location>
        <position position="285"/>
    </location>
</feature>
<protein>
    <recommendedName>
        <fullName evidence="1">Tyrosine recombinase XerC</fullName>
    </recommendedName>
</protein>
<keyword id="KW-0131">Cell cycle</keyword>
<keyword id="KW-0132">Cell division</keyword>
<keyword id="KW-0159">Chromosome partition</keyword>
<keyword id="KW-0963">Cytoplasm</keyword>
<keyword id="KW-0229">DNA integration</keyword>
<keyword id="KW-0233">DNA recombination</keyword>
<keyword id="KW-0238">DNA-binding</keyword>
<accession>C3PLU8</accession>
<name>XERC_RICAE</name>
<organism>
    <name type="scientific">Rickettsia africae (strain ESF-5)</name>
    <dbReference type="NCBI Taxonomy" id="347255"/>
    <lineage>
        <taxon>Bacteria</taxon>
        <taxon>Pseudomonadati</taxon>
        <taxon>Pseudomonadota</taxon>
        <taxon>Alphaproteobacteria</taxon>
        <taxon>Rickettsiales</taxon>
        <taxon>Rickettsiaceae</taxon>
        <taxon>Rickettsieae</taxon>
        <taxon>Rickettsia</taxon>
        <taxon>spotted fever group</taxon>
    </lineage>
</organism>
<comment type="function">
    <text evidence="1">Site-specific tyrosine recombinase, which acts by catalyzing the cutting and rejoining of the recombining DNA molecules. The XerC-XerD complex is essential to convert dimers of the bacterial chromosome into monomers to permit their segregation at cell division. It also contributes to the segregational stability of plasmids.</text>
</comment>
<comment type="subunit">
    <text evidence="1">Forms a cyclic heterotetrameric complex composed of two molecules of XerC and two molecules of XerD.</text>
</comment>
<comment type="subcellular location">
    <subcellularLocation>
        <location evidence="1">Cytoplasm</location>
    </subcellularLocation>
</comment>
<comment type="similarity">
    <text evidence="1">Belongs to the 'phage' integrase family. XerC subfamily.</text>
</comment>